<gene>
    <name type="primary">cpx</name>
    <name type="ORF">CG32490</name>
</gene>
<dbReference type="EMBL" id="AF260578">
    <property type="protein sequence ID" value="AAF69518.1"/>
    <property type="molecule type" value="mRNA"/>
</dbReference>
<dbReference type="EMBL" id="AE014297">
    <property type="protein sequence ID" value="AAN13291.1"/>
    <property type="molecule type" value="Genomic_DNA"/>
</dbReference>
<dbReference type="EMBL" id="AE014297">
    <property type="protein sequence ID" value="AAN13292.1"/>
    <property type="molecule type" value="Genomic_DNA"/>
</dbReference>
<dbReference type="EMBL" id="AE014297">
    <property type="protein sequence ID" value="AAN13293.1"/>
    <property type="molecule type" value="Genomic_DNA"/>
</dbReference>
<dbReference type="EMBL" id="AE014297">
    <property type="protein sequence ID" value="AAN13294.1"/>
    <property type="molecule type" value="Genomic_DNA"/>
</dbReference>
<dbReference type="EMBL" id="AE014297">
    <property type="protein sequence ID" value="AAN13295.1"/>
    <property type="molecule type" value="Genomic_DNA"/>
</dbReference>
<dbReference type="EMBL" id="AE014297">
    <property type="protein sequence ID" value="AAN13296.2"/>
    <property type="molecule type" value="Genomic_DNA"/>
</dbReference>
<dbReference type="EMBL" id="AE014297">
    <property type="protein sequence ID" value="AAX52938.1"/>
    <property type="molecule type" value="Genomic_DNA"/>
</dbReference>
<dbReference type="EMBL" id="AE014297">
    <property type="protein sequence ID" value="AAX52939.1"/>
    <property type="molecule type" value="Genomic_DNA"/>
</dbReference>
<dbReference type="EMBL" id="AE014297">
    <property type="protein sequence ID" value="ABW08589.1"/>
    <property type="molecule type" value="Genomic_DNA"/>
</dbReference>
<dbReference type="EMBL" id="AE014297">
    <property type="protein sequence ID" value="ABW08590.1"/>
    <property type="molecule type" value="Genomic_DNA"/>
</dbReference>
<dbReference type="EMBL" id="AE014297">
    <property type="protein sequence ID" value="ABW08591.1"/>
    <property type="molecule type" value="Genomic_DNA"/>
</dbReference>
<dbReference type="EMBL" id="AE014297">
    <property type="protein sequence ID" value="ABW08592.1"/>
    <property type="molecule type" value="Genomic_DNA"/>
</dbReference>
<dbReference type="EMBL" id="AE014297">
    <property type="protein sequence ID" value="ABW08593.1"/>
    <property type="molecule type" value="Genomic_DNA"/>
</dbReference>
<dbReference type="EMBL" id="AE014297">
    <property type="protein sequence ID" value="ABW08594.2"/>
    <property type="molecule type" value="Genomic_DNA"/>
</dbReference>
<dbReference type="EMBL" id="AE014297">
    <property type="protein sequence ID" value="ABW08595.1"/>
    <property type="molecule type" value="Genomic_DNA"/>
</dbReference>
<dbReference type="EMBL" id="AY121629">
    <property type="protein sequence ID" value="AAM51956.1"/>
    <property type="molecule type" value="mRNA"/>
</dbReference>
<dbReference type="EMBL" id="BT001797">
    <property type="protein sequence ID" value="AAN71552.1"/>
    <property type="molecule type" value="mRNA"/>
</dbReference>
<dbReference type="EMBL" id="BT003456">
    <property type="protein sequence ID" value="AAO39459.1"/>
    <property type="molecule type" value="mRNA"/>
</dbReference>
<dbReference type="EMBL" id="BT012438">
    <property type="protein sequence ID" value="AAS93709.1"/>
    <property type="molecule type" value="mRNA"/>
</dbReference>
<dbReference type="RefSeq" id="NP_001014602.1">
    <molecule id="Q8IPM8-4"/>
    <property type="nucleotide sequence ID" value="NM_001014602.3"/>
</dbReference>
<dbReference type="RefSeq" id="NP_001014603.1">
    <molecule id="Q8IPM8-4"/>
    <property type="nucleotide sequence ID" value="NM_001014603.3"/>
</dbReference>
<dbReference type="RefSeq" id="NP_001097673.1">
    <molecule id="Q8IPM8-5"/>
    <property type="nucleotide sequence ID" value="NM_001104203.3"/>
</dbReference>
<dbReference type="RefSeq" id="NP_001097674.1">
    <molecule id="Q8IPM8-3"/>
    <property type="nucleotide sequence ID" value="NM_001104204.3"/>
</dbReference>
<dbReference type="RefSeq" id="NP_001097676.1">
    <molecule id="Q8IPM8-3"/>
    <property type="nucleotide sequence ID" value="NM_001104206.3"/>
</dbReference>
<dbReference type="RefSeq" id="NP_001097677.1">
    <molecule id="Q8IPM8-3"/>
    <property type="nucleotide sequence ID" value="NM_001104207.2"/>
</dbReference>
<dbReference type="RefSeq" id="NP_001097678.3">
    <property type="nucleotide sequence ID" value="NM_001104208.4"/>
</dbReference>
<dbReference type="RefSeq" id="NP_001163500.1">
    <property type="nucleotide sequence ID" value="NM_001170029.2"/>
</dbReference>
<dbReference type="RefSeq" id="NP_001163501.1">
    <molecule id="Q8IPM8-1"/>
    <property type="nucleotide sequence ID" value="NM_001170030.1"/>
</dbReference>
<dbReference type="RefSeq" id="NP_001163502.1">
    <molecule id="Q8IPM8-3"/>
    <property type="nucleotide sequence ID" value="NM_001170031.2"/>
</dbReference>
<dbReference type="RefSeq" id="NP_001163503.1">
    <molecule id="Q8IPM8-1"/>
    <property type="nucleotide sequence ID" value="NM_001170032.2"/>
</dbReference>
<dbReference type="RefSeq" id="NP_001163504.1">
    <property type="nucleotide sequence ID" value="NM_001170033.2"/>
</dbReference>
<dbReference type="RefSeq" id="NP_525019.2">
    <molecule id="Q8IPM8-2"/>
    <property type="nucleotide sequence ID" value="NM_080280.4"/>
</dbReference>
<dbReference type="RefSeq" id="NP_730800.1">
    <molecule id="Q8IPM8-1"/>
    <property type="nucleotide sequence ID" value="NM_164327.5"/>
</dbReference>
<dbReference type="RefSeq" id="NP_730801.1">
    <molecule id="Q8IPM8-1"/>
    <property type="nucleotide sequence ID" value="NM_164328.4"/>
</dbReference>
<dbReference type="RefSeq" id="NP_730802.1">
    <molecule id="Q8IPM8-1"/>
    <property type="nucleotide sequence ID" value="NM_164329.3"/>
</dbReference>
<dbReference type="RefSeq" id="NP_730803.1">
    <molecule id="Q8IPM8-3"/>
    <property type="nucleotide sequence ID" value="NM_164330.4"/>
</dbReference>
<dbReference type="RefSeq" id="NP_730804.2">
    <molecule id="Q8IPM8-1"/>
    <property type="nucleotide sequence ID" value="NM_164331.3"/>
</dbReference>
<dbReference type="SMR" id="Q8IPM8"/>
<dbReference type="BioGRID" id="72863">
    <property type="interactions" value="9"/>
</dbReference>
<dbReference type="DIP" id="DIP-29220N"/>
<dbReference type="FunCoup" id="Q8IPM8">
    <property type="interactions" value="154"/>
</dbReference>
<dbReference type="IntAct" id="Q8IPM8">
    <property type="interactions" value="34"/>
</dbReference>
<dbReference type="STRING" id="7227.FBpp0307585"/>
<dbReference type="PaxDb" id="7227-FBpp0290013"/>
<dbReference type="DNASU" id="64877"/>
<dbReference type="EnsemblMetazoa" id="FBtr0078897">
    <molecule id="Q8IPM8-1"/>
    <property type="protein sequence ID" value="FBpp0078537"/>
    <property type="gene ID" value="FBgn0041605"/>
</dbReference>
<dbReference type="EnsemblMetazoa" id="FBtr0078898">
    <molecule id="Q8IPM8-1"/>
    <property type="protein sequence ID" value="FBpp0078538"/>
    <property type="gene ID" value="FBgn0041605"/>
</dbReference>
<dbReference type="EnsemblMetazoa" id="FBtr0078899">
    <molecule id="Q8IPM8-1"/>
    <property type="protein sequence ID" value="FBpp0078539"/>
    <property type="gene ID" value="FBgn0041605"/>
</dbReference>
<dbReference type="EnsemblMetazoa" id="FBtr0078900">
    <molecule id="Q8IPM8-3"/>
    <property type="protein sequence ID" value="FBpp0078540"/>
    <property type="gene ID" value="FBgn0041605"/>
</dbReference>
<dbReference type="EnsemblMetazoa" id="FBtr0078901">
    <molecule id="Q8IPM8-1"/>
    <property type="protein sequence ID" value="FBpp0078541"/>
    <property type="gene ID" value="FBgn0041605"/>
</dbReference>
<dbReference type="EnsemblMetazoa" id="FBtr0078902">
    <molecule id="Q8IPM8-2"/>
    <property type="protein sequence ID" value="FBpp0078542"/>
    <property type="gene ID" value="FBgn0041605"/>
</dbReference>
<dbReference type="EnsemblMetazoa" id="FBtr0100499">
    <molecule id="Q8IPM8-4"/>
    <property type="protein sequence ID" value="FBpp0099936"/>
    <property type="gene ID" value="FBgn0041605"/>
</dbReference>
<dbReference type="EnsemblMetazoa" id="FBtr0100500">
    <molecule id="Q8IPM8-4"/>
    <property type="protein sequence ID" value="FBpp0099938"/>
    <property type="gene ID" value="FBgn0041605"/>
</dbReference>
<dbReference type="EnsemblMetazoa" id="FBtr0113337">
    <molecule id="Q8IPM8-5"/>
    <property type="protein sequence ID" value="FBpp0112249"/>
    <property type="gene ID" value="FBgn0041605"/>
</dbReference>
<dbReference type="EnsemblMetazoa" id="FBtr0113338">
    <molecule id="Q8IPM8-3"/>
    <property type="protein sequence ID" value="FBpp0112250"/>
    <property type="gene ID" value="FBgn0041605"/>
</dbReference>
<dbReference type="EnsemblMetazoa" id="FBtr0113340">
    <molecule id="Q8IPM8-3"/>
    <property type="protein sequence ID" value="FBpp0112252"/>
    <property type="gene ID" value="FBgn0041605"/>
</dbReference>
<dbReference type="EnsemblMetazoa" id="FBtr0113341">
    <molecule id="Q8IPM8-3"/>
    <property type="protein sequence ID" value="FBpp0112253"/>
    <property type="gene ID" value="FBgn0041605"/>
</dbReference>
<dbReference type="EnsemblMetazoa" id="FBtr0301769">
    <molecule id="Q8IPM8-1"/>
    <property type="protein sequence ID" value="FBpp0290983"/>
    <property type="gene ID" value="FBgn0041605"/>
</dbReference>
<dbReference type="EnsemblMetazoa" id="FBtr0301770">
    <molecule id="Q8IPM8-3"/>
    <property type="protein sequence ID" value="FBpp0290984"/>
    <property type="gene ID" value="FBgn0041605"/>
</dbReference>
<dbReference type="EnsemblMetazoa" id="FBtr0301771">
    <molecule id="Q8IPM8-1"/>
    <property type="protein sequence ID" value="FBpp0290985"/>
    <property type="gene ID" value="FBgn0041605"/>
</dbReference>
<dbReference type="GeneID" id="64877"/>
<dbReference type="KEGG" id="dme:Dmel_CG32490"/>
<dbReference type="UCSC" id="CG32490-RA">
    <molecule id="Q8IPM8-1"/>
    <property type="organism name" value="d. melanogaster"/>
</dbReference>
<dbReference type="UCSC" id="CG32490-RL">
    <property type="organism name" value="d. melanogaster"/>
</dbReference>
<dbReference type="UCSC" id="CG32490-RM">
    <property type="organism name" value="d. melanogaster"/>
</dbReference>
<dbReference type="UCSC" id="CG32490-RQ">
    <property type="organism name" value="d. melanogaster"/>
</dbReference>
<dbReference type="UCSC" id="CG32490-RR">
    <property type="organism name" value="d. melanogaster"/>
</dbReference>
<dbReference type="AGR" id="FB:FBgn0041605"/>
<dbReference type="CTD" id="64877"/>
<dbReference type="FlyBase" id="FBgn0041605">
    <property type="gene designation" value="cpx"/>
</dbReference>
<dbReference type="VEuPathDB" id="VectorBase:FBgn0041605"/>
<dbReference type="eggNOG" id="ENOG502S3I2">
    <property type="taxonomic scope" value="Eukaryota"/>
</dbReference>
<dbReference type="GeneTree" id="ENSGT00950000182938"/>
<dbReference type="HOGENOM" id="CLU_132159_0_1_1"/>
<dbReference type="InParanoid" id="Q8IPM8"/>
<dbReference type="OMA" id="AKMILGN"/>
<dbReference type="OrthoDB" id="6229630at2759"/>
<dbReference type="PhylomeDB" id="Q8IPM8"/>
<dbReference type="Reactome" id="R-DME-181429">
    <property type="pathway name" value="Serotonin Neurotransmitter Release Cycle"/>
</dbReference>
<dbReference type="Reactome" id="R-DME-181430">
    <property type="pathway name" value="Norepinephrine Neurotransmitter Release Cycle"/>
</dbReference>
<dbReference type="Reactome" id="R-DME-210500">
    <property type="pathway name" value="Glutamate Neurotransmitter Release Cycle"/>
</dbReference>
<dbReference type="Reactome" id="R-DME-212676">
    <property type="pathway name" value="Dopamine Neurotransmitter Release Cycle"/>
</dbReference>
<dbReference type="Reactome" id="R-DME-264642">
    <property type="pathway name" value="Acetylcholine Neurotransmitter Release Cycle"/>
</dbReference>
<dbReference type="Reactome" id="R-DME-888590">
    <property type="pathway name" value="GABA synthesis, release, reuptake and degradation"/>
</dbReference>
<dbReference type="BioGRID-ORCS" id="64877">
    <property type="hits" value="0 hits in 3 CRISPR screens"/>
</dbReference>
<dbReference type="ChiTaRS" id="cpx">
    <property type="organism name" value="fly"/>
</dbReference>
<dbReference type="GenomeRNAi" id="64877"/>
<dbReference type="PRO" id="PR:Q8IPM8"/>
<dbReference type="Proteomes" id="UP000000803">
    <property type="component" value="Chromosome 3R"/>
</dbReference>
<dbReference type="Bgee" id="FBgn0041605">
    <property type="expression patterns" value="Expressed in lamina monopolar neuron L2 (Drosophila) in brain and 249 other cell types or tissues"/>
</dbReference>
<dbReference type="ExpressionAtlas" id="Q8IPM8">
    <property type="expression patterns" value="baseline and differential"/>
</dbReference>
<dbReference type="GO" id="GO:0005829">
    <property type="term" value="C:cytosol"/>
    <property type="evidence" value="ECO:0007005"/>
    <property type="project" value="FlyBase"/>
</dbReference>
<dbReference type="GO" id="GO:0016020">
    <property type="term" value="C:membrane"/>
    <property type="evidence" value="ECO:0000314"/>
    <property type="project" value="FlyBase"/>
</dbReference>
<dbReference type="GO" id="GO:0031594">
    <property type="term" value="C:neuromuscular junction"/>
    <property type="evidence" value="ECO:0000314"/>
    <property type="project" value="FlyBase"/>
</dbReference>
<dbReference type="GO" id="GO:0048786">
    <property type="term" value="C:presynaptic active zone"/>
    <property type="evidence" value="ECO:0000314"/>
    <property type="project" value="FlyBase"/>
</dbReference>
<dbReference type="GO" id="GO:0031201">
    <property type="term" value="C:SNARE complex"/>
    <property type="evidence" value="ECO:0000318"/>
    <property type="project" value="GO_Central"/>
</dbReference>
<dbReference type="GO" id="GO:0043195">
    <property type="term" value="C:terminal bouton"/>
    <property type="evidence" value="ECO:0000314"/>
    <property type="project" value="FlyBase"/>
</dbReference>
<dbReference type="GO" id="GO:0061174">
    <property type="term" value="C:type I terminal bouton"/>
    <property type="evidence" value="ECO:0000314"/>
    <property type="project" value="FlyBase"/>
</dbReference>
<dbReference type="GO" id="GO:0000149">
    <property type="term" value="F:SNARE binding"/>
    <property type="evidence" value="ECO:0000318"/>
    <property type="project" value="GO_Central"/>
</dbReference>
<dbReference type="GO" id="GO:0019905">
    <property type="term" value="F:syntaxin binding"/>
    <property type="evidence" value="ECO:0007669"/>
    <property type="project" value="InterPro"/>
</dbReference>
<dbReference type="GO" id="GO:0050804">
    <property type="term" value="P:modulation of chemical synaptic transmission"/>
    <property type="evidence" value="ECO:0000315"/>
    <property type="project" value="FlyBase"/>
</dbReference>
<dbReference type="GO" id="GO:0046929">
    <property type="term" value="P:negative regulation of neurotransmitter secretion"/>
    <property type="evidence" value="ECO:0000315"/>
    <property type="project" value="FlyBase"/>
</dbReference>
<dbReference type="GO" id="GO:0007274">
    <property type="term" value="P:neuromuscular synaptic transmission"/>
    <property type="evidence" value="ECO:0000315"/>
    <property type="project" value="FlyBase"/>
</dbReference>
<dbReference type="GO" id="GO:0046928">
    <property type="term" value="P:regulation of neurotransmitter secretion"/>
    <property type="evidence" value="ECO:0000315"/>
    <property type="project" value="FlyBase"/>
</dbReference>
<dbReference type="GO" id="GO:0031630">
    <property type="term" value="P:regulation of synaptic vesicle fusion to presynaptic active zone membrane"/>
    <property type="evidence" value="ECO:0000318"/>
    <property type="project" value="GO_Central"/>
</dbReference>
<dbReference type="GO" id="GO:0051124">
    <property type="term" value="P:synaptic assembly at neuromuscular junction"/>
    <property type="evidence" value="ECO:0000315"/>
    <property type="project" value="FlyBase"/>
</dbReference>
<dbReference type="GO" id="GO:0016079">
    <property type="term" value="P:synaptic vesicle exocytosis"/>
    <property type="evidence" value="ECO:0000315"/>
    <property type="project" value="FlyBase"/>
</dbReference>
<dbReference type="FunFam" id="1.20.5.580:FF:000002">
    <property type="entry name" value="Complexin, isoform AB"/>
    <property type="match status" value="1"/>
</dbReference>
<dbReference type="Gene3D" id="1.20.5.580">
    <property type="entry name" value="Single Helix bin"/>
    <property type="match status" value="1"/>
</dbReference>
<dbReference type="InterPro" id="IPR008849">
    <property type="entry name" value="Synaphin"/>
</dbReference>
<dbReference type="PANTHER" id="PTHR16705">
    <property type="entry name" value="COMPLEXIN"/>
    <property type="match status" value="1"/>
</dbReference>
<dbReference type="PANTHER" id="PTHR16705:SF4">
    <property type="entry name" value="COMPLEXIN"/>
    <property type="match status" value="1"/>
</dbReference>
<dbReference type="Pfam" id="PF05835">
    <property type="entry name" value="Synaphin"/>
    <property type="match status" value="1"/>
</dbReference>
<dbReference type="SUPFAM" id="SSF58038">
    <property type="entry name" value="SNARE fusion complex"/>
    <property type="match status" value="1"/>
</dbReference>
<organism>
    <name type="scientific">Drosophila melanogaster</name>
    <name type="common">Fruit fly</name>
    <dbReference type="NCBI Taxonomy" id="7227"/>
    <lineage>
        <taxon>Eukaryota</taxon>
        <taxon>Metazoa</taxon>
        <taxon>Ecdysozoa</taxon>
        <taxon>Arthropoda</taxon>
        <taxon>Hexapoda</taxon>
        <taxon>Insecta</taxon>
        <taxon>Pterygota</taxon>
        <taxon>Neoptera</taxon>
        <taxon>Endopterygota</taxon>
        <taxon>Diptera</taxon>
        <taxon>Brachycera</taxon>
        <taxon>Muscomorpha</taxon>
        <taxon>Ephydroidea</taxon>
        <taxon>Drosophilidae</taxon>
        <taxon>Drosophila</taxon>
        <taxon>Sophophora</taxon>
    </lineage>
</organism>
<evidence type="ECO:0000250" key="1"/>
<evidence type="ECO:0000255" key="2"/>
<evidence type="ECO:0000256" key="3">
    <source>
        <dbReference type="SAM" id="MobiDB-lite"/>
    </source>
</evidence>
<evidence type="ECO:0000303" key="4">
    <source>
    </source>
</evidence>
<evidence type="ECO:0000303" key="5">
    <source>
    </source>
</evidence>
<evidence type="ECO:0000305" key="6"/>
<name>CPLX_DROME</name>
<keyword id="KW-0025">Alternative splicing</keyword>
<keyword id="KW-0175">Coiled coil</keyword>
<keyword id="KW-0268">Exocytosis</keyword>
<keyword id="KW-0449">Lipoprotein</keyword>
<keyword id="KW-0472">Membrane</keyword>
<keyword id="KW-0488">Methylation</keyword>
<keyword id="KW-0532">Neurotransmitter transport</keyword>
<keyword id="KW-0636">Prenylation</keyword>
<keyword id="KW-1185">Reference proteome</keyword>
<keyword id="KW-0813">Transport</keyword>
<feature type="chain" id="PRO_0000240243" description="Complexin">
    <location>
        <begin position="1"/>
        <end position="139"/>
    </location>
</feature>
<feature type="propeptide" id="PRO_0000240244" description="Removed in mature form" evidence="2">
    <location>
        <begin position="140"/>
        <end position="142"/>
    </location>
</feature>
<feature type="region of interest" description="Disordered" evidence="3">
    <location>
        <begin position="13"/>
        <end position="70"/>
    </location>
</feature>
<feature type="region of interest" description="Disordered" evidence="3">
    <location>
        <begin position="83"/>
        <end position="105"/>
    </location>
</feature>
<feature type="coiled-coil region" evidence="2">
    <location>
        <begin position="29"/>
        <end position="138"/>
    </location>
</feature>
<feature type="compositionally biased region" description="Basic and acidic residues" evidence="3">
    <location>
        <begin position="31"/>
        <end position="70"/>
    </location>
</feature>
<feature type="modified residue" description="Cysteine methyl ester" evidence="2">
    <location>
        <position position="139"/>
    </location>
</feature>
<feature type="lipid moiety-binding region" description="S-farnesyl cysteine" evidence="2">
    <location>
        <position position="139"/>
    </location>
</feature>
<feature type="splice variant" id="VSP_019323" description="In isoform J." evidence="5">
    <location>
        <begin position="1"/>
        <end position="59"/>
    </location>
</feature>
<feature type="splice variant" id="VSP_041846" description="In isoform T." evidence="6">
    <original>AAFIAKQMVGNQLSAVKG</original>
    <variation>RNRLITSRRSLIYSKAGILTQRS</variation>
    <location>
        <begin position="2"/>
        <end position="19"/>
    </location>
</feature>
<feature type="splice variant" id="VSP_035401" description="In isoform L." evidence="6">
    <original>AAFIAKQMVGNQLSAVK</original>
    <variation>NFI</variation>
    <location>
        <begin position="2"/>
        <end position="18"/>
    </location>
</feature>
<feature type="splice variant" id="VSP_035402" description="In isoform R." evidence="6">
    <original>AFIAKQMVGNQLSAVKG</original>
    <variation>LHIYFKVHRFC</variation>
    <location>
        <begin position="3"/>
        <end position="19"/>
    </location>
</feature>
<feature type="splice variant" id="VSP_019324" description="In isoform C." evidence="5">
    <location>
        <begin position="19"/>
        <end position="21"/>
    </location>
</feature>
<feature type="splice variant" id="VSP_019325" description="In isoform E." evidence="4">
    <original>F</original>
    <variation>FT</variation>
    <location>
        <position position="117"/>
    </location>
</feature>
<feature type="splice variant" id="VSP_019326" description="In isoform E." evidence="4">
    <original>NQIETQVNELKTQIEGKCVMQ</original>
    <variation>KRLSDAFKNCPLRNLF</variation>
    <location>
        <begin position="122"/>
        <end position="142"/>
    </location>
</feature>
<feature type="sequence conflict" description="In Ref. 4; AAM51956/AAN71552." evidence="6" ref="4">
    <original>GAV</original>
    <variation>DAAG</variation>
    <location>
        <begin position="19"/>
        <end position="21"/>
    </location>
</feature>
<feature type="sequence conflict" description="In Ref. 4; AAS93709." evidence="6" ref="4">
    <original>I</original>
    <variation>M</variation>
    <location>
        <position position="124"/>
    </location>
</feature>
<feature type="sequence conflict" description="In Ref. 4; AAS93709." evidence="6" ref="4">
    <original>N</original>
    <variation>S</variation>
    <location>
        <position position="129"/>
    </location>
</feature>
<feature type="sequence conflict" description="In Ref. 4; AAS93709." evidence="6" ref="4">
    <original>S</original>
    <variation>N</variation>
    <location sequence="Q8IPM8-2">
        <position position="126"/>
    </location>
</feature>
<proteinExistence type="evidence at transcript level"/>
<sequence>MAAFIAKQMVGNQLSAVKGAVGGDGGDDGDDKEKAEEEERERQEAIKEAEDRRKEKHRKMEEEREKMRQDIRDKYNIKKKEEIVEAAPQEEPNPLMRKKKTPEELAAEAEQEELDDFTKLKNQIETQVNELKTQIEGKCVMQ</sequence>
<protein>
    <recommendedName>
        <fullName>Complexin</fullName>
    </recommendedName>
</protein>
<reference key="1">
    <citation type="journal article" date="2000" name="J. Biol. Chem.">
        <title>Selective interaction of complexin with the neuronal SNARE complex. Determination of the binding regions.</title>
        <authorList>
            <person name="Pabst S."/>
            <person name="Hazzard J.W."/>
            <person name="Antonin W."/>
            <person name="Suedhof T.C."/>
            <person name="Jahn R."/>
            <person name="Rizo J."/>
            <person name="Fasshauer D."/>
        </authorList>
    </citation>
    <scope>NUCLEOTIDE SEQUENCE [MRNA] (ISOFORM E)</scope>
</reference>
<reference key="2">
    <citation type="journal article" date="2000" name="Science">
        <title>The genome sequence of Drosophila melanogaster.</title>
        <authorList>
            <person name="Adams M.D."/>
            <person name="Celniker S.E."/>
            <person name="Holt R.A."/>
            <person name="Evans C.A."/>
            <person name="Gocayne J.D."/>
            <person name="Amanatides P.G."/>
            <person name="Scherer S.E."/>
            <person name="Li P.W."/>
            <person name="Hoskins R.A."/>
            <person name="Galle R.F."/>
            <person name="George R.A."/>
            <person name="Lewis S.E."/>
            <person name="Richards S."/>
            <person name="Ashburner M."/>
            <person name="Henderson S.N."/>
            <person name="Sutton G.G."/>
            <person name="Wortman J.R."/>
            <person name="Yandell M.D."/>
            <person name="Zhang Q."/>
            <person name="Chen L.X."/>
            <person name="Brandon R.C."/>
            <person name="Rogers Y.-H.C."/>
            <person name="Blazej R.G."/>
            <person name="Champe M."/>
            <person name="Pfeiffer B.D."/>
            <person name="Wan K.H."/>
            <person name="Doyle C."/>
            <person name="Baxter E.G."/>
            <person name="Helt G."/>
            <person name="Nelson C.R."/>
            <person name="Miklos G.L.G."/>
            <person name="Abril J.F."/>
            <person name="Agbayani A."/>
            <person name="An H.-J."/>
            <person name="Andrews-Pfannkoch C."/>
            <person name="Baldwin D."/>
            <person name="Ballew R.M."/>
            <person name="Basu A."/>
            <person name="Baxendale J."/>
            <person name="Bayraktaroglu L."/>
            <person name="Beasley E.M."/>
            <person name="Beeson K.Y."/>
            <person name="Benos P.V."/>
            <person name="Berman B.P."/>
            <person name="Bhandari D."/>
            <person name="Bolshakov S."/>
            <person name="Borkova D."/>
            <person name="Botchan M.R."/>
            <person name="Bouck J."/>
            <person name="Brokstein P."/>
            <person name="Brottier P."/>
            <person name="Burtis K.C."/>
            <person name="Busam D.A."/>
            <person name="Butler H."/>
            <person name="Cadieu E."/>
            <person name="Center A."/>
            <person name="Chandra I."/>
            <person name="Cherry J.M."/>
            <person name="Cawley S."/>
            <person name="Dahlke C."/>
            <person name="Davenport L.B."/>
            <person name="Davies P."/>
            <person name="de Pablos B."/>
            <person name="Delcher A."/>
            <person name="Deng Z."/>
            <person name="Mays A.D."/>
            <person name="Dew I."/>
            <person name="Dietz S.M."/>
            <person name="Dodson K."/>
            <person name="Doup L.E."/>
            <person name="Downes M."/>
            <person name="Dugan-Rocha S."/>
            <person name="Dunkov B.C."/>
            <person name="Dunn P."/>
            <person name="Durbin K.J."/>
            <person name="Evangelista C.C."/>
            <person name="Ferraz C."/>
            <person name="Ferriera S."/>
            <person name="Fleischmann W."/>
            <person name="Fosler C."/>
            <person name="Gabrielian A.E."/>
            <person name="Garg N.S."/>
            <person name="Gelbart W.M."/>
            <person name="Glasser K."/>
            <person name="Glodek A."/>
            <person name="Gong F."/>
            <person name="Gorrell J.H."/>
            <person name="Gu Z."/>
            <person name="Guan P."/>
            <person name="Harris M."/>
            <person name="Harris N.L."/>
            <person name="Harvey D.A."/>
            <person name="Heiman T.J."/>
            <person name="Hernandez J.R."/>
            <person name="Houck J."/>
            <person name="Hostin D."/>
            <person name="Houston K.A."/>
            <person name="Howland T.J."/>
            <person name="Wei M.-H."/>
            <person name="Ibegwam C."/>
            <person name="Jalali M."/>
            <person name="Kalush F."/>
            <person name="Karpen G.H."/>
            <person name="Ke Z."/>
            <person name="Kennison J.A."/>
            <person name="Ketchum K.A."/>
            <person name="Kimmel B.E."/>
            <person name="Kodira C.D."/>
            <person name="Kraft C.L."/>
            <person name="Kravitz S."/>
            <person name="Kulp D."/>
            <person name="Lai Z."/>
            <person name="Lasko P."/>
            <person name="Lei Y."/>
            <person name="Levitsky A.A."/>
            <person name="Li J.H."/>
            <person name="Li Z."/>
            <person name="Liang Y."/>
            <person name="Lin X."/>
            <person name="Liu X."/>
            <person name="Mattei B."/>
            <person name="McIntosh T.C."/>
            <person name="McLeod M.P."/>
            <person name="McPherson D."/>
            <person name="Merkulov G."/>
            <person name="Milshina N.V."/>
            <person name="Mobarry C."/>
            <person name="Morris J."/>
            <person name="Moshrefi A."/>
            <person name="Mount S.M."/>
            <person name="Moy M."/>
            <person name="Murphy B."/>
            <person name="Murphy L."/>
            <person name="Muzny D.M."/>
            <person name="Nelson D.L."/>
            <person name="Nelson D.R."/>
            <person name="Nelson K.A."/>
            <person name="Nixon K."/>
            <person name="Nusskern D.R."/>
            <person name="Pacleb J.M."/>
            <person name="Palazzolo M."/>
            <person name="Pittman G.S."/>
            <person name="Pan S."/>
            <person name="Pollard J."/>
            <person name="Puri V."/>
            <person name="Reese M.G."/>
            <person name="Reinert K."/>
            <person name="Remington K."/>
            <person name="Saunders R.D.C."/>
            <person name="Scheeler F."/>
            <person name="Shen H."/>
            <person name="Shue B.C."/>
            <person name="Siden-Kiamos I."/>
            <person name="Simpson M."/>
            <person name="Skupski M.P."/>
            <person name="Smith T.J."/>
            <person name="Spier E."/>
            <person name="Spradling A.C."/>
            <person name="Stapleton M."/>
            <person name="Strong R."/>
            <person name="Sun E."/>
            <person name="Svirskas R."/>
            <person name="Tector C."/>
            <person name="Turner R."/>
            <person name="Venter E."/>
            <person name="Wang A.H."/>
            <person name="Wang X."/>
            <person name="Wang Z.-Y."/>
            <person name="Wassarman D.A."/>
            <person name="Weinstock G.M."/>
            <person name="Weissenbach J."/>
            <person name="Williams S.M."/>
            <person name="Woodage T."/>
            <person name="Worley K.C."/>
            <person name="Wu D."/>
            <person name="Yang S."/>
            <person name="Yao Q.A."/>
            <person name="Ye J."/>
            <person name="Yeh R.-F."/>
            <person name="Zaveri J.S."/>
            <person name="Zhan M."/>
            <person name="Zhang G."/>
            <person name="Zhao Q."/>
            <person name="Zheng L."/>
            <person name="Zheng X.H."/>
            <person name="Zhong F.N."/>
            <person name="Zhong W."/>
            <person name="Zhou X."/>
            <person name="Zhu S.C."/>
            <person name="Zhu X."/>
            <person name="Smith H.O."/>
            <person name="Gibbs R.A."/>
            <person name="Myers E.W."/>
            <person name="Rubin G.M."/>
            <person name="Venter J.C."/>
        </authorList>
    </citation>
    <scope>NUCLEOTIDE SEQUENCE [LARGE SCALE GENOMIC DNA]</scope>
    <source>
        <strain>Berkeley</strain>
    </source>
</reference>
<reference key="3">
    <citation type="journal article" date="2002" name="Genome Biol.">
        <title>Annotation of the Drosophila melanogaster euchromatic genome: a systematic review.</title>
        <authorList>
            <person name="Misra S."/>
            <person name="Crosby M.A."/>
            <person name="Mungall C.J."/>
            <person name="Matthews B.B."/>
            <person name="Campbell K.S."/>
            <person name="Hradecky P."/>
            <person name="Huang Y."/>
            <person name="Kaminker J.S."/>
            <person name="Millburn G.H."/>
            <person name="Prochnik S.E."/>
            <person name="Smith C.D."/>
            <person name="Tupy J.L."/>
            <person name="Whitfield E.J."/>
            <person name="Bayraktaroglu L."/>
            <person name="Berman B.P."/>
            <person name="Bettencourt B.R."/>
            <person name="Celniker S.E."/>
            <person name="de Grey A.D.N.J."/>
            <person name="Drysdale R.A."/>
            <person name="Harris N.L."/>
            <person name="Richter J."/>
            <person name="Russo S."/>
            <person name="Schroeder A.J."/>
            <person name="Shu S.Q."/>
            <person name="Stapleton M."/>
            <person name="Yamada C."/>
            <person name="Ashburner M."/>
            <person name="Gelbart W.M."/>
            <person name="Rubin G.M."/>
            <person name="Lewis S.E."/>
        </authorList>
    </citation>
    <scope>GENOME REANNOTATION</scope>
    <scope>ALTERNATIVE SPLICING</scope>
    <source>
        <strain>Berkeley</strain>
    </source>
</reference>
<reference key="4">
    <citation type="journal article" date="2002" name="Genome Biol.">
        <title>A Drosophila full-length cDNA resource.</title>
        <authorList>
            <person name="Stapleton M."/>
            <person name="Carlson J.W."/>
            <person name="Brokstein P."/>
            <person name="Yu C."/>
            <person name="Champe M."/>
            <person name="George R.A."/>
            <person name="Guarin H."/>
            <person name="Kronmiller B."/>
            <person name="Pacleb J.M."/>
            <person name="Park S."/>
            <person name="Wan K.H."/>
            <person name="Rubin G.M."/>
            <person name="Celniker S.E."/>
        </authorList>
    </citation>
    <scope>NUCLEOTIDE SEQUENCE [LARGE SCALE MRNA] (ISOFORMS A; C AND J)</scope>
    <source>
        <strain>Berkeley</strain>
        <tissue>Head</tissue>
    </source>
</reference>
<comment type="function">
    <text evidence="1">Positively regulates a late step in synaptic vesicle exocytosis.</text>
</comment>
<comment type="subunit">
    <text evidence="1">Binds to the SNARE core complex containing Snap25, synaptobrevin and Syx1A.</text>
</comment>
<comment type="subcellular location">
    <subcellularLocation>
        <location evidence="6">Membrane</location>
        <topology evidence="6">Lipid-anchor</topology>
    </subcellularLocation>
</comment>
<comment type="alternative products">
    <event type="alternative splicing"/>
    <isoform>
        <id>Q8IPM8-1</id>
        <name>A</name>
        <name>G</name>
        <name>H</name>
        <name>I</name>
        <sequence type="displayed"/>
    </isoform>
    <isoform>
        <id>Q8IPM8-2</id>
        <name>E</name>
        <sequence type="described" ref="VSP_019325 VSP_019326"/>
    </isoform>
    <isoform>
        <id>Q8IPM8-3</id>
        <name>C</name>
        <name>M</name>
        <name>N</name>
        <name>O</name>
        <name>P</name>
        <sequence type="described" ref="VSP_019324"/>
    </isoform>
    <isoform>
        <id>Q8IPM8-4</id>
        <name>J</name>
        <name>K</name>
        <sequence type="described" ref="VSP_019323"/>
    </isoform>
    <isoform>
        <id>Q8IPM8-5</id>
        <name>L</name>
        <sequence type="described" ref="VSP_035401"/>
    </isoform>
    <isoform>
        <id>Q8IPM8-7</id>
        <name>R</name>
        <sequence type="described" ref="VSP_035402"/>
    </isoform>
    <isoform>
        <id>Q8IPM8-8</id>
        <name>T</name>
        <sequence type="described" ref="VSP_041846"/>
    </isoform>
</comment>
<comment type="similarity">
    <text evidence="6">Belongs to the complexin/synaphin family.</text>
</comment>
<accession>Q8IPM8</accession>
<accession>A4V2D0</accession>
<accession>A4V2D3</accession>
<accession>A8JQS1</accession>
<accession>A8JQS4</accession>
<accession>A8JQS8</accession>
<accession>A8JQS9</accession>
<accession>Q6NL98</accession>
<accession>Q86P65</accession>
<accession>Q8IPM7</accession>
<accession>Q8IPM9</accession>
<accession>Q8MRE4</accession>
<accession>Q9NBA0</accession>